<name>RL6_PROMH</name>
<reference key="1">
    <citation type="journal article" date="2008" name="J. Bacteriol.">
        <title>Complete genome sequence of uropathogenic Proteus mirabilis, a master of both adherence and motility.</title>
        <authorList>
            <person name="Pearson M.M."/>
            <person name="Sebaihia M."/>
            <person name="Churcher C."/>
            <person name="Quail M.A."/>
            <person name="Seshasayee A.S."/>
            <person name="Luscombe N.M."/>
            <person name="Abdellah Z."/>
            <person name="Arrosmith C."/>
            <person name="Atkin B."/>
            <person name="Chillingworth T."/>
            <person name="Hauser H."/>
            <person name="Jagels K."/>
            <person name="Moule S."/>
            <person name="Mungall K."/>
            <person name="Norbertczak H."/>
            <person name="Rabbinowitsch E."/>
            <person name="Walker D."/>
            <person name="Whithead S."/>
            <person name="Thomson N.R."/>
            <person name="Rather P.N."/>
            <person name="Parkhill J."/>
            <person name="Mobley H.L.T."/>
        </authorList>
    </citation>
    <scope>NUCLEOTIDE SEQUENCE [LARGE SCALE GENOMIC DNA]</scope>
    <source>
        <strain>HI4320</strain>
    </source>
</reference>
<dbReference type="EMBL" id="AM942759">
    <property type="protein sequence ID" value="CAR46410.1"/>
    <property type="molecule type" value="Genomic_DNA"/>
</dbReference>
<dbReference type="RefSeq" id="WP_004246948.1">
    <property type="nucleotide sequence ID" value="NC_010554.1"/>
</dbReference>
<dbReference type="SMR" id="B4F1J9"/>
<dbReference type="EnsemblBacteria" id="CAR46410">
    <property type="protein sequence ID" value="CAR46410"/>
    <property type="gene ID" value="PMI3270"/>
</dbReference>
<dbReference type="GeneID" id="6802519"/>
<dbReference type="KEGG" id="pmr:PMI3270"/>
<dbReference type="eggNOG" id="COG0097">
    <property type="taxonomic scope" value="Bacteria"/>
</dbReference>
<dbReference type="HOGENOM" id="CLU_065464_1_2_6"/>
<dbReference type="Proteomes" id="UP000008319">
    <property type="component" value="Chromosome"/>
</dbReference>
<dbReference type="GO" id="GO:0022625">
    <property type="term" value="C:cytosolic large ribosomal subunit"/>
    <property type="evidence" value="ECO:0007669"/>
    <property type="project" value="TreeGrafter"/>
</dbReference>
<dbReference type="GO" id="GO:0019843">
    <property type="term" value="F:rRNA binding"/>
    <property type="evidence" value="ECO:0007669"/>
    <property type="project" value="UniProtKB-UniRule"/>
</dbReference>
<dbReference type="GO" id="GO:0003735">
    <property type="term" value="F:structural constituent of ribosome"/>
    <property type="evidence" value="ECO:0007669"/>
    <property type="project" value="InterPro"/>
</dbReference>
<dbReference type="GO" id="GO:0002181">
    <property type="term" value="P:cytoplasmic translation"/>
    <property type="evidence" value="ECO:0007669"/>
    <property type="project" value="TreeGrafter"/>
</dbReference>
<dbReference type="FunFam" id="3.90.930.12:FF:000001">
    <property type="entry name" value="50S ribosomal protein L6"/>
    <property type="match status" value="1"/>
</dbReference>
<dbReference type="FunFam" id="3.90.930.12:FF:000002">
    <property type="entry name" value="50S ribosomal protein L6"/>
    <property type="match status" value="1"/>
</dbReference>
<dbReference type="Gene3D" id="3.90.930.12">
    <property type="entry name" value="Ribosomal protein L6, alpha-beta domain"/>
    <property type="match status" value="2"/>
</dbReference>
<dbReference type="HAMAP" id="MF_01365_B">
    <property type="entry name" value="Ribosomal_uL6_B"/>
    <property type="match status" value="1"/>
</dbReference>
<dbReference type="InterPro" id="IPR000702">
    <property type="entry name" value="Ribosomal_uL6-like"/>
</dbReference>
<dbReference type="InterPro" id="IPR036789">
    <property type="entry name" value="Ribosomal_uL6-like_a/b-dom_sf"/>
</dbReference>
<dbReference type="InterPro" id="IPR020040">
    <property type="entry name" value="Ribosomal_uL6_a/b-dom"/>
</dbReference>
<dbReference type="InterPro" id="IPR019906">
    <property type="entry name" value="Ribosomal_uL6_bac-type"/>
</dbReference>
<dbReference type="InterPro" id="IPR002358">
    <property type="entry name" value="Ribosomal_uL6_CS"/>
</dbReference>
<dbReference type="NCBIfam" id="TIGR03654">
    <property type="entry name" value="L6_bact"/>
    <property type="match status" value="1"/>
</dbReference>
<dbReference type="PANTHER" id="PTHR11655">
    <property type="entry name" value="60S/50S RIBOSOMAL PROTEIN L6/L9"/>
    <property type="match status" value="1"/>
</dbReference>
<dbReference type="PANTHER" id="PTHR11655:SF14">
    <property type="entry name" value="LARGE RIBOSOMAL SUBUNIT PROTEIN UL6M"/>
    <property type="match status" value="1"/>
</dbReference>
<dbReference type="Pfam" id="PF00347">
    <property type="entry name" value="Ribosomal_L6"/>
    <property type="match status" value="2"/>
</dbReference>
<dbReference type="PIRSF" id="PIRSF002162">
    <property type="entry name" value="Ribosomal_L6"/>
    <property type="match status" value="1"/>
</dbReference>
<dbReference type="PRINTS" id="PR00059">
    <property type="entry name" value="RIBOSOMALL6"/>
</dbReference>
<dbReference type="SUPFAM" id="SSF56053">
    <property type="entry name" value="Ribosomal protein L6"/>
    <property type="match status" value="2"/>
</dbReference>
<dbReference type="PROSITE" id="PS00525">
    <property type="entry name" value="RIBOSOMAL_L6_1"/>
    <property type="match status" value="1"/>
</dbReference>
<gene>
    <name evidence="1" type="primary">rplF</name>
    <name type="ordered locus">PMI3270</name>
</gene>
<organism>
    <name type="scientific">Proteus mirabilis (strain HI4320)</name>
    <dbReference type="NCBI Taxonomy" id="529507"/>
    <lineage>
        <taxon>Bacteria</taxon>
        <taxon>Pseudomonadati</taxon>
        <taxon>Pseudomonadota</taxon>
        <taxon>Gammaproteobacteria</taxon>
        <taxon>Enterobacterales</taxon>
        <taxon>Morganellaceae</taxon>
        <taxon>Proteus</taxon>
    </lineage>
</organism>
<keyword id="KW-1185">Reference proteome</keyword>
<keyword id="KW-0687">Ribonucleoprotein</keyword>
<keyword id="KW-0689">Ribosomal protein</keyword>
<keyword id="KW-0694">RNA-binding</keyword>
<keyword id="KW-0699">rRNA-binding</keyword>
<protein>
    <recommendedName>
        <fullName evidence="1">Large ribosomal subunit protein uL6</fullName>
    </recommendedName>
    <alternativeName>
        <fullName evidence="2">50S ribosomal protein L6</fullName>
    </alternativeName>
</protein>
<comment type="function">
    <text evidence="1">This protein binds to the 23S rRNA, and is important in its secondary structure. It is located near the subunit interface in the base of the L7/L12 stalk, and near the tRNA binding site of the peptidyltransferase center.</text>
</comment>
<comment type="subunit">
    <text evidence="1">Part of the 50S ribosomal subunit.</text>
</comment>
<comment type="similarity">
    <text evidence="1">Belongs to the universal ribosomal protein uL6 family.</text>
</comment>
<sequence>MSRVAKAPVVIPAGVEVKLNGQVITIKGKNGELTRTIHNAVEIQHADNQLTFAPRDGYADAWAQAGTTRSLLNAMVVGVTEGFTKKLQLVGVGYRASVKGNTVNLSVGYSHPVEHQLPAGITAECPTQTEILLKGADKQVIGQVAAELRAYRRPEPYKGKGIRYADEVVRIKEAKKK</sequence>
<feature type="chain" id="PRO_1000144031" description="Large ribosomal subunit protein uL6">
    <location>
        <begin position="1"/>
        <end position="177"/>
    </location>
</feature>
<accession>B4F1J9</accession>
<evidence type="ECO:0000255" key="1">
    <source>
        <dbReference type="HAMAP-Rule" id="MF_01365"/>
    </source>
</evidence>
<evidence type="ECO:0000305" key="2"/>
<proteinExistence type="inferred from homology"/>